<gene>
    <name evidence="1" type="primary">pdxY</name>
    <name type="ordered locus">Pfl01_5650</name>
</gene>
<comment type="function">
    <text evidence="1">Pyridoxal kinase involved in the salvage pathway of pyridoxal 5'-phosphate (PLP). Catalyzes the phosphorylation of pyridoxal to PLP.</text>
</comment>
<comment type="catalytic activity">
    <reaction evidence="1">
        <text>pyridoxal + ATP = pyridoxal 5'-phosphate + ADP + H(+)</text>
        <dbReference type="Rhea" id="RHEA:10224"/>
        <dbReference type="ChEBI" id="CHEBI:15378"/>
        <dbReference type="ChEBI" id="CHEBI:17310"/>
        <dbReference type="ChEBI" id="CHEBI:30616"/>
        <dbReference type="ChEBI" id="CHEBI:456216"/>
        <dbReference type="ChEBI" id="CHEBI:597326"/>
        <dbReference type="EC" id="2.7.1.35"/>
    </reaction>
</comment>
<comment type="cofactor">
    <cofactor evidence="1">
        <name>Mg(2+)</name>
        <dbReference type="ChEBI" id="CHEBI:18420"/>
    </cofactor>
</comment>
<comment type="pathway">
    <text evidence="1">Cofactor metabolism; pyridoxal 5'-phosphate salvage; pyridoxal 5'-phosphate from pyridoxal: step 1/1.</text>
</comment>
<comment type="subunit">
    <text evidence="1">Homodimer.</text>
</comment>
<comment type="similarity">
    <text evidence="1">Belongs to the pyridoxine kinase family. PdxY subfamily.</text>
</comment>
<sequence>MKRTPHLLAIQSHVVFGHAGNSAAVFPMQRVGVNVWPLNTVQFSNHTQYGQWAGEVLAPHRIPELVEGIAAIGELGNCDAVLSGYLGSAAQGRAILSGIERIKAVNPKALYLCDPVMGHPEKGCSVPAEVSDFLLEEAAAVADFMCPNQLELDSFSGRKPQSLFDCLAMARALLARGPKAVLVKHLDYPGKPADGFEMLLVTAEGSWHLRRPLLAFPRQPVGVGDLTSGLFLARVLLGDNLVAAFEFTAAAVHEVLLETQACASYELQLVRAQDRIAHPRVKFEATPISL</sequence>
<dbReference type="EC" id="2.7.1.35" evidence="1"/>
<dbReference type="EMBL" id="CP000094">
    <property type="protein sequence ID" value="ABA77386.1"/>
    <property type="molecule type" value="Genomic_DNA"/>
</dbReference>
<dbReference type="RefSeq" id="WP_011336643.1">
    <property type="nucleotide sequence ID" value="NC_007492.2"/>
</dbReference>
<dbReference type="SMR" id="Q3K4B8"/>
<dbReference type="KEGG" id="pfo:Pfl01_5650"/>
<dbReference type="eggNOG" id="COG2240">
    <property type="taxonomic scope" value="Bacteria"/>
</dbReference>
<dbReference type="HOGENOM" id="CLU_046496_3_0_6"/>
<dbReference type="UniPathway" id="UPA01068">
    <property type="reaction ID" value="UER00298"/>
</dbReference>
<dbReference type="Proteomes" id="UP000002704">
    <property type="component" value="Chromosome"/>
</dbReference>
<dbReference type="GO" id="GO:0005829">
    <property type="term" value="C:cytosol"/>
    <property type="evidence" value="ECO:0007669"/>
    <property type="project" value="TreeGrafter"/>
</dbReference>
<dbReference type="GO" id="GO:0005524">
    <property type="term" value="F:ATP binding"/>
    <property type="evidence" value="ECO:0007669"/>
    <property type="project" value="UniProtKB-UniRule"/>
</dbReference>
<dbReference type="GO" id="GO:0000287">
    <property type="term" value="F:magnesium ion binding"/>
    <property type="evidence" value="ECO:0007669"/>
    <property type="project" value="UniProtKB-UniRule"/>
</dbReference>
<dbReference type="GO" id="GO:0008478">
    <property type="term" value="F:pyridoxal kinase activity"/>
    <property type="evidence" value="ECO:0007669"/>
    <property type="project" value="UniProtKB-UniRule"/>
</dbReference>
<dbReference type="GO" id="GO:0009443">
    <property type="term" value="P:pyridoxal 5'-phosphate salvage"/>
    <property type="evidence" value="ECO:0007669"/>
    <property type="project" value="UniProtKB-UniRule"/>
</dbReference>
<dbReference type="CDD" id="cd01173">
    <property type="entry name" value="pyridoxal_pyridoxamine_kinase"/>
    <property type="match status" value="1"/>
</dbReference>
<dbReference type="FunFam" id="3.40.1190.20:FF:000008">
    <property type="entry name" value="Pyridoxal kinase PdxY"/>
    <property type="match status" value="1"/>
</dbReference>
<dbReference type="Gene3D" id="3.40.1190.20">
    <property type="match status" value="1"/>
</dbReference>
<dbReference type="HAMAP" id="MF_01639">
    <property type="entry name" value="PdxY"/>
    <property type="match status" value="1"/>
</dbReference>
<dbReference type="InterPro" id="IPR013749">
    <property type="entry name" value="PM/HMP-P_kinase-1"/>
</dbReference>
<dbReference type="InterPro" id="IPR004625">
    <property type="entry name" value="PyrdxlKinase"/>
</dbReference>
<dbReference type="InterPro" id="IPR023685">
    <property type="entry name" value="Pyridoxal_kinase_PdxY"/>
</dbReference>
<dbReference type="InterPro" id="IPR029056">
    <property type="entry name" value="Ribokinase-like"/>
</dbReference>
<dbReference type="NCBIfam" id="NF004398">
    <property type="entry name" value="PRK05756.1"/>
    <property type="match status" value="1"/>
</dbReference>
<dbReference type="NCBIfam" id="TIGR00687">
    <property type="entry name" value="pyridox_kin"/>
    <property type="match status" value="1"/>
</dbReference>
<dbReference type="PANTHER" id="PTHR10534">
    <property type="entry name" value="PYRIDOXAL KINASE"/>
    <property type="match status" value="1"/>
</dbReference>
<dbReference type="PANTHER" id="PTHR10534:SF2">
    <property type="entry name" value="PYRIDOXAL KINASE"/>
    <property type="match status" value="1"/>
</dbReference>
<dbReference type="Pfam" id="PF08543">
    <property type="entry name" value="Phos_pyr_kin"/>
    <property type="match status" value="1"/>
</dbReference>
<dbReference type="SUPFAM" id="SSF53613">
    <property type="entry name" value="Ribokinase-like"/>
    <property type="match status" value="1"/>
</dbReference>
<protein>
    <recommendedName>
        <fullName evidence="1">Pyridoxal kinase PdxY</fullName>
        <shortName evidence="1">PL kinase</shortName>
        <ecNumber evidence="1">2.7.1.35</ecNumber>
    </recommendedName>
</protein>
<feature type="chain" id="PRO_0000269820" description="Pyridoxal kinase PdxY">
    <location>
        <begin position="1"/>
        <end position="290"/>
    </location>
</feature>
<feature type="binding site" evidence="1">
    <location>
        <position position="12"/>
    </location>
    <ligand>
        <name>substrate</name>
    </ligand>
</feature>
<feature type="binding site" evidence="1">
    <location>
        <begin position="47"/>
        <end position="48"/>
    </location>
    <ligand>
        <name>substrate</name>
    </ligand>
</feature>
<feature type="binding site" evidence="1">
    <location>
        <position position="114"/>
    </location>
    <ligand>
        <name>ATP</name>
        <dbReference type="ChEBI" id="CHEBI:30616"/>
    </ligand>
</feature>
<feature type="binding site" evidence="1">
    <location>
        <position position="151"/>
    </location>
    <ligand>
        <name>ATP</name>
        <dbReference type="ChEBI" id="CHEBI:30616"/>
    </ligand>
</feature>
<feature type="binding site" evidence="1">
    <location>
        <position position="184"/>
    </location>
    <ligand>
        <name>ATP</name>
        <dbReference type="ChEBI" id="CHEBI:30616"/>
    </ligand>
</feature>
<feature type="binding site" evidence="1">
    <location>
        <begin position="211"/>
        <end position="214"/>
    </location>
    <ligand>
        <name>ATP</name>
        <dbReference type="ChEBI" id="CHEBI:30616"/>
    </ligand>
</feature>
<feature type="binding site" evidence="1">
    <location>
        <position position="225"/>
    </location>
    <ligand>
        <name>substrate</name>
    </ligand>
</feature>
<accession>Q3K4B8</accession>
<keyword id="KW-0067">ATP-binding</keyword>
<keyword id="KW-0418">Kinase</keyword>
<keyword id="KW-0460">Magnesium</keyword>
<keyword id="KW-0547">Nucleotide-binding</keyword>
<keyword id="KW-0808">Transferase</keyword>
<reference key="1">
    <citation type="journal article" date="2009" name="Genome Biol.">
        <title>Genomic and genetic analyses of diversity and plant interactions of Pseudomonas fluorescens.</title>
        <authorList>
            <person name="Silby M.W."/>
            <person name="Cerdeno-Tarraga A.M."/>
            <person name="Vernikos G.S."/>
            <person name="Giddens S.R."/>
            <person name="Jackson R.W."/>
            <person name="Preston G.M."/>
            <person name="Zhang X.-X."/>
            <person name="Moon C.D."/>
            <person name="Gehrig S.M."/>
            <person name="Godfrey S.A.C."/>
            <person name="Knight C.G."/>
            <person name="Malone J.G."/>
            <person name="Robinson Z."/>
            <person name="Spiers A.J."/>
            <person name="Harris S."/>
            <person name="Challis G.L."/>
            <person name="Yaxley A.M."/>
            <person name="Harris D."/>
            <person name="Seeger K."/>
            <person name="Murphy L."/>
            <person name="Rutter S."/>
            <person name="Squares R."/>
            <person name="Quail M.A."/>
            <person name="Saunders E."/>
            <person name="Mavromatis K."/>
            <person name="Brettin T.S."/>
            <person name="Bentley S.D."/>
            <person name="Hothersall J."/>
            <person name="Stephens E."/>
            <person name="Thomas C.M."/>
            <person name="Parkhill J."/>
            <person name="Levy S.B."/>
            <person name="Rainey P.B."/>
            <person name="Thomson N.R."/>
        </authorList>
    </citation>
    <scope>NUCLEOTIDE SEQUENCE [LARGE SCALE GENOMIC DNA]</scope>
    <source>
        <strain>Pf0-1</strain>
    </source>
</reference>
<organism>
    <name type="scientific">Pseudomonas fluorescens (strain Pf0-1)</name>
    <dbReference type="NCBI Taxonomy" id="205922"/>
    <lineage>
        <taxon>Bacteria</taxon>
        <taxon>Pseudomonadati</taxon>
        <taxon>Pseudomonadota</taxon>
        <taxon>Gammaproteobacteria</taxon>
        <taxon>Pseudomonadales</taxon>
        <taxon>Pseudomonadaceae</taxon>
        <taxon>Pseudomonas</taxon>
    </lineage>
</organism>
<proteinExistence type="inferred from homology"/>
<name>PDXY_PSEPF</name>
<evidence type="ECO:0000255" key="1">
    <source>
        <dbReference type="HAMAP-Rule" id="MF_01639"/>
    </source>
</evidence>